<protein>
    <recommendedName>
        <fullName>Serine/threonine-protein kinase Sgk2</fullName>
        <ecNumber>2.7.11.1</ecNumber>
    </recommendedName>
    <alternativeName>
        <fullName>Serum/glucocorticoid-regulated kinase 2</fullName>
    </alternativeName>
</protein>
<comment type="function">
    <text evidence="8 9 10 11 12 14 15">Serine/threonine-protein kinase which is involved in the regulation of a wide variety of ion channels, membrane transporters, cell growth, survival and proliferation. Up-regulates Na(+) channels: SCNN1A/ENAC, K(+) channels: KCNA3/Kv1.3, KCNE1 and KCNQ1, amino acid transporter: SLC6A19, glutamate transporter: SLC1A6/EAAT4, glutamate receptors: GRIA1/GLUR1 and GRIK2/GLUR6, Na(+)/H(+) exchanger: SLC9A3/NHE3, and the Na(+)/K(+) ATPase.</text>
</comment>
<comment type="catalytic activity">
    <reaction>
        <text>L-seryl-[protein] + ATP = O-phospho-L-seryl-[protein] + ADP + H(+)</text>
        <dbReference type="Rhea" id="RHEA:17989"/>
        <dbReference type="Rhea" id="RHEA-COMP:9863"/>
        <dbReference type="Rhea" id="RHEA-COMP:11604"/>
        <dbReference type="ChEBI" id="CHEBI:15378"/>
        <dbReference type="ChEBI" id="CHEBI:29999"/>
        <dbReference type="ChEBI" id="CHEBI:30616"/>
        <dbReference type="ChEBI" id="CHEBI:83421"/>
        <dbReference type="ChEBI" id="CHEBI:456216"/>
        <dbReference type="EC" id="2.7.11.1"/>
    </reaction>
</comment>
<comment type="catalytic activity">
    <reaction>
        <text>L-threonyl-[protein] + ATP = O-phospho-L-threonyl-[protein] + ADP + H(+)</text>
        <dbReference type="Rhea" id="RHEA:46608"/>
        <dbReference type="Rhea" id="RHEA-COMP:11060"/>
        <dbReference type="Rhea" id="RHEA-COMP:11605"/>
        <dbReference type="ChEBI" id="CHEBI:15378"/>
        <dbReference type="ChEBI" id="CHEBI:30013"/>
        <dbReference type="ChEBI" id="CHEBI:30616"/>
        <dbReference type="ChEBI" id="CHEBI:61977"/>
        <dbReference type="ChEBI" id="CHEBI:456216"/>
        <dbReference type="EC" id="2.7.11.1"/>
    </reaction>
</comment>
<comment type="activity regulation">
    <text>Two specific sites, one in the kinase domain (Thr-193) and the other in the C-terminal regulatory region (Ser-356), need to be phosphorylated for its full activation.</text>
</comment>
<comment type="interaction">
    <interactant intactId="EBI-3914329">
        <id>Q9HBY8</id>
    </interactant>
    <interactant intactId="EBI-352572">
        <id>P08238</id>
        <label>HSP90AB1</label>
    </interactant>
    <organismsDiffer>false</organismsDiffer>
    <experiments>3</experiments>
</comment>
<comment type="interaction">
    <interactant intactId="EBI-12143041">
        <id>Q9HBY8-2</id>
    </interactant>
    <interactant intactId="EBI-723624">
        <id>Q9BW71</id>
        <label>HIRIP3</label>
    </interactant>
    <organismsDiffer>false</organismsDiffer>
    <experiments>5</experiments>
</comment>
<comment type="interaction">
    <interactant intactId="EBI-12143041">
        <id>Q9HBY8-2</id>
    </interactant>
    <interactant intactId="EBI-10182608">
        <id>O15305</id>
        <label>PMM2</label>
    </interactant>
    <organismsDiffer>false</organismsDiffer>
    <experiments>5</experiments>
</comment>
<comment type="subcellular location">
    <subcellularLocation>
        <location evidence="15">Cytoplasm</location>
    </subcellularLocation>
    <subcellularLocation>
        <location evidence="15">Nucleus</location>
    </subcellularLocation>
</comment>
<comment type="alternative products">
    <event type="alternative splicing"/>
    <isoform>
        <id>Q9HBY8-2</id>
        <name>1</name>
        <name>alpha</name>
        <sequence type="displayed"/>
    </isoform>
    <isoform>
        <id>Q9HBY8-1</id>
        <name>2</name>
        <name>beta</name>
        <sequence type="described" ref="VSP_060876"/>
    </isoform>
    <isoform>
        <id>Q9HBY8-3</id>
        <name>3</name>
        <sequence type="described" ref="VSP_060877"/>
    </isoform>
</comment>
<comment type="tissue specificity">
    <text evidence="7">Highly expressed in liver, kidney and pancreas, and at lower levels in brain.</text>
</comment>
<comment type="PTM">
    <text evidence="7">Activated by phosphorylation on Ser-356 by an unknown kinase (may be mTORC2 but not confirmed), transforming it into a substrate for PDPK1 which then phosphorylates it on Thr-193.</text>
</comment>
<comment type="similarity">
    <text evidence="16">Belongs to the protein kinase superfamily. AGC Ser/Thr protein kinase family.</text>
</comment>
<comment type="caution">
    <text evidence="16">Not regulated by serum or glucocorticoids.</text>
</comment>
<keyword id="KW-0025">Alternative splicing</keyword>
<keyword id="KW-0067">ATP-binding</keyword>
<keyword id="KW-0963">Cytoplasm</keyword>
<keyword id="KW-0418">Kinase</keyword>
<keyword id="KW-0547">Nucleotide-binding</keyword>
<keyword id="KW-0539">Nucleus</keyword>
<keyword id="KW-0597">Phosphoprotein</keyword>
<keyword id="KW-1267">Proteomics identification</keyword>
<keyword id="KW-1185">Reference proteome</keyword>
<keyword id="KW-0723">Serine/threonine-protein kinase</keyword>
<keyword id="KW-0808">Transferase</keyword>
<sequence>MNSSPAGTPSPQPSRANGNINLGPSANPNAQPTDFDFLKVIGKGNYGKVLLAKRKSDGAFYAVKVLQKKSILKKKEQSHIMAERSVLLKNVRHPFLVGLRYSFQTPEKLYFVLDYVNGGELFFHLQRERRFLEPRARFYAAEVASAIGYLHSLNIIYRDLKPENILLDCQGHVVLTDFGLCKEGVEPEDTTSTFCGTPEYLAPEVLRKEPYDRAVDWWCLGAVLYEMLHGLPPFYSQDVSQMYENILHQPLQIPGGRTVAACDLLQSLLHKDQRQRLGSKADFLEIKNHVFFSPINWDDLYHKRLTPPFNPNVTGPADLKHFDPEFTQEAVSKSIGCTPDTVASSSGASSAFLGFSYAPEDDDILDC</sequence>
<dbReference type="EC" id="2.7.11.1"/>
<dbReference type="EMBL" id="AF169034">
    <property type="protein sequence ID" value="AAF12757.2"/>
    <property type="molecule type" value="mRNA"/>
</dbReference>
<dbReference type="EMBL" id="AF186470">
    <property type="protein sequence ID" value="AAG17012.1"/>
    <property type="molecule type" value="mRNA"/>
</dbReference>
<dbReference type="EMBL" id="AY987010">
    <property type="protein sequence ID" value="AAX88805.1"/>
    <property type="molecule type" value="mRNA"/>
</dbReference>
<dbReference type="EMBL" id="BT020098">
    <property type="protein sequence ID" value="AAV38901.1"/>
    <property type="molecule type" value="mRNA"/>
</dbReference>
<dbReference type="EMBL" id="Z98752">
    <property type="status" value="NOT_ANNOTATED_CDS"/>
    <property type="molecule type" value="Genomic_DNA"/>
</dbReference>
<dbReference type="EMBL" id="BC014037">
    <property type="protein sequence ID" value="AAH14037.3"/>
    <property type="molecule type" value="mRNA"/>
</dbReference>
<dbReference type="EMBL" id="BC065511">
    <property type="protein sequence ID" value="AAH65511.1"/>
    <property type="molecule type" value="mRNA"/>
</dbReference>
<dbReference type="CCDS" id="CCDS13321.1">
    <molecule id="Q9HBY8-2"/>
</dbReference>
<dbReference type="RefSeq" id="NP_001186193.1">
    <molecule id="Q9HBY8-2"/>
    <property type="nucleotide sequence ID" value="NM_001199264.2"/>
</dbReference>
<dbReference type="RefSeq" id="NP_057360.2">
    <molecule id="Q9HBY8-2"/>
    <property type="nucleotide sequence ID" value="NM_016276.3"/>
</dbReference>
<dbReference type="RefSeq" id="NP_733794.1">
    <molecule id="Q9HBY8-2"/>
    <property type="nucleotide sequence ID" value="NM_170693.3"/>
</dbReference>
<dbReference type="SMR" id="Q9HBY8"/>
<dbReference type="BioGRID" id="115416">
    <property type="interactions" value="42"/>
</dbReference>
<dbReference type="FunCoup" id="Q9HBY8">
    <property type="interactions" value="1193"/>
</dbReference>
<dbReference type="IntAct" id="Q9HBY8">
    <property type="interactions" value="23"/>
</dbReference>
<dbReference type="STRING" id="9606.ENSP00000340608"/>
<dbReference type="BindingDB" id="Q9HBY8"/>
<dbReference type="ChEMBL" id="CHEMBL5794"/>
<dbReference type="GuidetoPHARMACOLOGY" id="1535"/>
<dbReference type="GlyGen" id="Q9HBY8">
    <property type="glycosylation" value="1 site"/>
</dbReference>
<dbReference type="iPTMnet" id="Q9HBY8"/>
<dbReference type="PhosphoSitePlus" id="Q9HBY8"/>
<dbReference type="BioMuta" id="SGK2"/>
<dbReference type="DMDM" id="28558166"/>
<dbReference type="jPOST" id="Q9HBY8"/>
<dbReference type="MassIVE" id="Q9HBY8"/>
<dbReference type="PaxDb" id="9606-ENSP00000340608"/>
<dbReference type="PeptideAtlas" id="Q9HBY8"/>
<dbReference type="ProteomicsDB" id="81612">
    <molecule id="Q9HBY8-1"/>
</dbReference>
<dbReference type="ProteomicsDB" id="81613">
    <molecule id="Q9HBY8-2"/>
</dbReference>
<dbReference type="ProteomicsDB" id="81614">
    <molecule id="Q9HBY8-3"/>
</dbReference>
<dbReference type="Antibodypedia" id="1638">
    <property type="antibodies" value="331 antibodies from 33 providers"/>
</dbReference>
<dbReference type="DNASU" id="10110"/>
<dbReference type="Ensembl" id="ENST00000341458.10">
    <molecule id="Q9HBY8-2"/>
    <property type="protein sequence ID" value="ENSP00000340608.5"/>
    <property type="gene ID" value="ENSG00000101049.18"/>
</dbReference>
<dbReference type="Ensembl" id="ENST00000373100.7">
    <molecule id="Q9HBY8-2"/>
    <property type="protein sequence ID" value="ENSP00000362192.1"/>
    <property type="gene ID" value="ENSG00000101049.18"/>
</dbReference>
<dbReference type="Ensembl" id="ENST00000423407.7">
    <molecule id="Q9HBY8-2"/>
    <property type="protein sequence ID" value="ENSP00000392795.3"/>
    <property type="gene ID" value="ENSG00000101049.18"/>
</dbReference>
<dbReference type="Ensembl" id="ENST00000426287.3">
    <molecule id="Q9HBY8-2"/>
    <property type="protein sequence ID" value="ENSP00000412214.2"/>
    <property type="gene ID" value="ENSG00000101049.18"/>
</dbReference>
<dbReference type="GeneID" id="10110"/>
<dbReference type="KEGG" id="hsa:10110"/>
<dbReference type="MANE-Select" id="ENST00000373100.7">
    <property type="protein sequence ID" value="ENSP00000362192.1"/>
    <property type="RefSeq nucleotide sequence ID" value="NM_170693.3"/>
    <property type="RefSeq protein sequence ID" value="NP_733794.1"/>
</dbReference>
<dbReference type="UCSC" id="uc002xkr.4">
    <molecule id="Q9HBY8-2"/>
    <property type="organism name" value="human"/>
</dbReference>
<dbReference type="AGR" id="HGNC:13900"/>
<dbReference type="CTD" id="10110"/>
<dbReference type="DisGeNET" id="10110"/>
<dbReference type="GeneCards" id="SGK2"/>
<dbReference type="HGNC" id="HGNC:13900">
    <property type="gene designation" value="SGK2"/>
</dbReference>
<dbReference type="HPA" id="ENSG00000101049">
    <property type="expression patterns" value="Tissue enhanced (intestine, kidney, liver)"/>
</dbReference>
<dbReference type="MIM" id="607589">
    <property type="type" value="gene"/>
</dbReference>
<dbReference type="neXtProt" id="NX_Q9HBY8"/>
<dbReference type="OpenTargets" id="ENSG00000101049"/>
<dbReference type="VEuPathDB" id="HostDB:ENSG00000101049"/>
<dbReference type="eggNOG" id="KOG0598">
    <property type="taxonomic scope" value="Eukaryota"/>
</dbReference>
<dbReference type="GeneTree" id="ENSGT00940000153776"/>
<dbReference type="InParanoid" id="Q9HBY8"/>
<dbReference type="OrthoDB" id="63267at2759"/>
<dbReference type="PAN-GO" id="Q9HBY8">
    <property type="GO annotations" value="4 GO annotations based on evolutionary models"/>
</dbReference>
<dbReference type="PhylomeDB" id="Q9HBY8"/>
<dbReference type="TreeFam" id="TF320906"/>
<dbReference type="PathwayCommons" id="Q9HBY8"/>
<dbReference type="Reactome" id="R-HSA-2672351">
    <property type="pathway name" value="Stimuli-sensing channels"/>
</dbReference>
<dbReference type="SignaLink" id="Q9HBY8"/>
<dbReference type="SIGNOR" id="Q9HBY8"/>
<dbReference type="BioGRID-ORCS" id="10110">
    <property type="hits" value="13 hits in 1184 CRISPR screens"/>
</dbReference>
<dbReference type="ChiTaRS" id="SGK2">
    <property type="organism name" value="human"/>
</dbReference>
<dbReference type="GeneWiki" id="SGK2"/>
<dbReference type="GenomeRNAi" id="10110"/>
<dbReference type="Pharos" id="Q9HBY8">
    <property type="development level" value="Tchem"/>
</dbReference>
<dbReference type="PRO" id="PR:Q9HBY8"/>
<dbReference type="Proteomes" id="UP000005640">
    <property type="component" value="Chromosome 20"/>
</dbReference>
<dbReference type="RNAct" id="Q9HBY8">
    <property type="molecule type" value="protein"/>
</dbReference>
<dbReference type="Bgee" id="ENSG00000101049">
    <property type="expression patterns" value="Expressed in mucosa of transverse colon and 143 other cell types or tissues"/>
</dbReference>
<dbReference type="ExpressionAtlas" id="Q9HBY8">
    <property type="expression patterns" value="baseline and differential"/>
</dbReference>
<dbReference type="GO" id="GO:0005829">
    <property type="term" value="C:cytosol"/>
    <property type="evidence" value="ECO:0000304"/>
    <property type="project" value="Reactome"/>
</dbReference>
<dbReference type="GO" id="GO:0005654">
    <property type="term" value="C:nucleoplasm"/>
    <property type="evidence" value="ECO:0000314"/>
    <property type="project" value="HPA"/>
</dbReference>
<dbReference type="GO" id="GO:0005524">
    <property type="term" value="F:ATP binding"/>
    <property type="evidence" value="ECO:0007669"/>
    <property type="project" value="UniProtKB-KW"/>
</dbReference>
<dbReference type="GO" id="GO:0015459">
    <property type="term" value="F:potassium channel regulator activity"/>
    <property type="evidence" value="ECO:0000314"/>
    <property type="project" value="UniProtKB"/>
</dbReference>
<dbReference type="GO" id="GO:0106310">
    <property type="term" value="F:protein serine kinase activity"/>
    <property type="evidence" value="ECO:0007669"/>
    <property type="project" value="RHEA"/>
</dbReference>
<dbReference type="GO" id="GO:0004674">
    <property type="term" value="F:protein serine/threonine kinase activity"/>
    <property type="evidence" value="ECO:0000318"/>
    <property type="project" value="GO_Central"/>
</dbReference>
<dbReference type="GO" id="GO:0017080">
    <property type="term" value="F:sodium channel regulator activity"/>
    <property type="evidence" value="ECO:0000304"/>
    <property type="project" value="UniProtKB"/>
</dbReference>
<dbReference type="GO" id="GO:0035556">
    <property type="term" value="P:intracellular signal transduction"/>
    <property type="evidence" value="ECO:0000318"/>
    <property type="project" value="GO_Central"/>
</dbReference>
<dbReference type="GO" id="GO:0032411">
    <property type="term" value="P:positive regulation of transporter activity"/>
    <property type="evidence" value="ECO:0000304"/>
    <property type="project" value="UniProtKB"/>
</dbReference>
<dbReference type="GO" id="GO:0006468">
    <property type="term" value="P:protein phosphorylation"/>
    <property type="evidence" value="ECO:0000304"/>
    <property type="project" value="ProtInc"/>
</dbReference>
<dbReference type="GO" id="GO:0001558">
    <property type="term" value="P:regulation of cell growth"/>
    <property type="evidence" value="ECO:0000304"/>
    <property type="project" value="UniProtKB"/>
</dbReference>
<dbReference type="GO" id="GO:0042127">
    <property type="term" value="P:regulation of cell population proliferation"/>
    <property type="evidence" value="ECO:0000304"/>
    <property type="project" value="UniProtKB"/>
</dbReference>
<dbReference type="GO" id="GO:0006979">
    <property type="term" value="P:response to oxidative stress"/>
    <property type="evidence" value="ECO:0000304"/>
    <property type="project" value="ProtInc"/>
</dbReference>
<dbReference type="CDD" id="cd05603">
    <property type="entry name" value="STKc_SGK2"/>
    <property type="match status" value="1"/>
</dbReference>
<dbReference type="FunFam" id="1.10.510.10:FF:000065">
    <property type="entry name" value="Non-specific serine/threonine protein kinase"/>
    <property type="match status" value="1"/>
</dbReference>
<dbReference type="FunFam" id="3.30.200.20:FF:000030">
    <property type="entry name" value="Non-specific serine/threonine protein kinase"/>
    <property type="match status" value="1"/>
</dbReference>
<dbReference type="Gene3D" id="3.30.200.20">
    <property type="entry name" value="Phosphorylase Kinase, domain 1"/>
    <property type="match status" value="1"/>
</dbReference>
<dbReference type="Gene3D" id="1.10.510.10">
    <property type="entry name" value="Transferase(Phosphotransferase) domain 1"/>
    <property type="match status" value="1"/>
</dbReference>
<dbReference type="InterPro" id="IPR000961">
    <property type="entry name" value="AGC-kinase_C"/>
</dbReference>
<dbReference type="InterPro" id="IPR011009">
    <property type="entry name" value="Kinase-like_dom_sf"/>
</dbReference>
<dbReference type="InterPro" id="IPR017892">
    <property type="entry name" value="Pkinase_C"/>
</dbReference>
<dbReference type="InterPro" id="IPR000719">
    <property type="entry name" value="Prot_kinase_dom"/>
</dbReference>
<dbReference type="InterPro" id="IPR017441">
    <property type="entry name" value="Protein_kinase_ATP_BS"/>
</dbReference>
<dbReference type="InterPro" id="IPR008271">
    <property type="entry name" value="Ser/Thr_kinase_AS"/>
</dbReference>
<dbReference type="PANTHER" id="PTHR24351">
    <property type="entry name" value="RIBOSOMAL PROTEIN S6 KINASE"/>
    <property type="match status" value="1"/>
</dbReference>
<dbReference type="Pfam" id="PF00069">
    <property type="entry name" value="Pkinase"/>
    <property type="match status" value="1"/>
</dbReference>
<dbReference type="Pfam" id="PF00433">
    <property type="entry name" value="Pkinase_C"/>
    <property type="match status" value="1"/>
</dbReference>
<dbReference type="SMART" id="SM00133">
    <property type="entry name" value="S_TK_X"/>
    <property type="match status" value="1"/>
</dbReference>
<dbReference type="SMART" id="SM00220">
    <property type="entry name" value="S_TKc"/>
    <property type="match status" value="1"/>
</dbReference>
<dbReference type="SUPFAM" id="SSF56112">
    <property type="entry name" value="Protein kinase-like (PK-like)"/>
    <property type="match status" value="1"/>
</dbReference>
<dbReference type="PROSITE" id="PS51285">
    <property type="entry name" value="AGC_KINASE_CTER"/>
    <property type="match status" value="1"/>
</dbReference>
<dbReference type="PROSITE" id="PS00107">
    <property type="entry name" value="PROTEIN_KINASE_ATP"/>
    <property type="match status" value="1"/>
</dbReference>
<dbReference type="PROSITE" id="PS50011">
    <property type="entry name" value="PROTEIN_KINASE_DOM"/>
    <property type="match status" value="1"/>
</dbReference>
<dbReference type="PROSITE" id="PS00108">
    <property type="entry name" value="PROTEIN_KINASE_ST"/>
    <property type="match status" value="1"/>
</dbReference>
<accession>Q9HBY8</accession>
<accession>Q52PK5</accession>
<accession>Q5H8Y6</accession>
<accession>Q5H8Z1</accession>
<accession>Q5TZR3</accession>
<accession>Q9UKG6</accession>
<name>SGK2_HUMAN</name>
<gene>
    <name type="primary">SGK2</name>
</gene>
<proteinExistence type="evidence at protein level"/>
<organism>
    <name type="scientific">Homo sapiens</name>
    <name type="common">Human</name>
    <dbReference type="NCBI Taxonomy" id="9606"/>
    <lineage>
        <taxon>Eukaryota</taxon>
        <taxon>Metazoa</taxon>
        <taxon>Chordata</taxon>
        <taxon>Craniata</taxon>
        <taxon>Vertebrata</taxon>
        <taxon>Euteleostomi</taxon>
        <taxon>Mammalia</taxon>
        <taxon>Eutheria</taxon>
        <taxon>Euarchontoglires</taxon>
        <taxon>Primates</taxon>
        <taxon>Haplorrhini</taxon>
        <taxon>Catarrhini</taxon>
        <taxon>Hominidae</taxon>
        <taxon>Homo</taxon>
    </lineage>
</organism>
<evidence type="ECO:0000250" key="1"/>
<evidence type="ECO:0000250" key="2">
    <source>
        <dbReference type="UniProtKB" id="Q8R4U9"/>
    </source>
</evidence>
<evidence type="ECO:0000255" key="3">
    <source>
        <dbReference type="PROSITE-ProRule" id="PRU00159"/>
    </source>
</evidence>
<evidence type="ECO:0000255" key="4">
    <source>
        <dbReference type="PROSITE-ProRule" id="PRU00618"/>
    </source>
</evidence>
<evidence type="ECO:0000255" key="5">
    <source>
        <dbReference type="PROSITE-ProRule" id="PRU10027"/>
    </source>
</evidence>
<evidence type="ECO:0000256" key="6">
    <source>
        <dbReference type="SAM" id="MobiDB-lite"/>
    </source>
</evidence>
<evidence type="ECO:0000269" key="7">
    <source>
    </source>
</evidence>
<evidence type="ECO:0000269" key="8">
    <source>
    </source>
</evidence>
<evidence type="ECO:0000269" key="9">
    <source>
    </source>
</evidence>
<evidence type="ECO:0000269" key="10">
    <source>
    </source>
</evidence>
<evidence type="ECO:0000269" key="11">
    <source>
    </source>
</evidence>
<evidence type="ECO:0000269" key="12">
    <source>
    </source>
</evidence>
<evidence type="ECO:0000269" key="13">
    <source>
    </source>
</evidence>
<evidence type="ECO:0000269" key="14">
    <source>
    </source>
</evidence>
<evidence type="ECO:0000269" key="15">
    <source>
    </source>
</evidence>
<evidence type="ECO:0000305" key="16"/>
<reference key="1">
    <citation type="journal article" date="1999" name="Biochem. J.">
        <title>Characterization of the structure and regulation of two novel isoforms of serum- and glucocorticoid-induced protein kinase.</title>
        <authorList>
            <person name="Kobayashi T."/>
            <person name="Deak M."/>
            <person name="Morrice N."/>
            <person name="Cohen P."/>
        </authorList>
    </citation>
    <scope>NUCLEOTIDE SEQUENCE [MRNA] (ISOFORMS 1 AND 2)</scope>
    <scope>TISSUE SPECIFICITY</scope>
    <scope>PHOSPHORYLATION AT THR-193</scope>
    <scope>MUTAGENESIS OF SER-356</scope>
</reference>
<reference key="2">
    <citation type="submission" date="2005-03" db="EMBL/GenBank/DDBJ databases">
        <authorList>
            <person name="Li H."/>
            <person name="Nong W."/>
            <person name="Zhou G."/>
            <person name="Ke R."/>
            <person name="Shen C."/>
            <person name="Zhong G."/>
            <person name="Zheng Z."/>
            <person name="Liang M."/>
            <person name="Xiao W."/>
            <person name="Lin L."/>
            <person name="Yang S."/>
        </authorList>
    </citation>
    <scope>NUCLEOTIDE SEQUENCE [MRNA] (ISOFORM 3)</scope>
</reference>
<reference key="3">
    <citation type="submission" date="2004-10" db="EMBL/GenBank/DDBJ databases">
        <title>Cloning of human full-length CDSs in BD Creator(TM) system donor vector.</title>
        <authorList>
            <person name="Kalnine N."/>
            <person name="Chen X."/>
            <person name="Rolfs A."/>
            <person name="Halleck A."/>
            <person name="Hines L."/>
            <person name="Eisenstein S."/>
            <person name="Koundinya M."/>
            <person name="Raphael J."/>
            <person name="Moreira D."/>
            <person name="Kelley T."/>
            <person name="LaBaer J."/>
            <person name="Lin Y."/>
            <person name="Phelan M."/>
            <person name="Farmer A."/>
        </authorList>
    </citation>
    <scope>NUCLEOTIDE SEQUENCE [LARGE SCALE MRNA] (ISOFORM 1)</scope>
</reference>
<reference key="4">
    <citation type="journal article" date="2001" name="Nature">
        <title>The DNA sequence and comparative analysis of human chromosome 20.</title>
        <authorList>
            <person name="Deloukas P."/>
            <person name="Matthews L.H."/>
            <person name="Ashurst J.L."/>
            <person name="Burton J."/>
            <person name="Gilbert J.G.R."/>
            <person name="Jones M."/>
            <person name="Stavrides G."/>
            <person name="Almeida J.P."/>
            <person name="Babbage A.K."/>
            <person name="Bagguley C.L."/>
            <person name="Bailey J."/>
            <person name="Barlow K.F."/>
            <person name="Bates K.N."/>
            <person name="Beard L.M."/>
            <person name="Beare D.M."/>
            <person name="Beasley O.P."/>
            <person name="Bird C.P."/>
            <person name="Blakey S.E."/>
            <person name="Bridgeman A.M."/>
            <person name="Brown A.J."/>
            <person name="Buck D."/>
            <person name="Burrill W.D."/>
            <person name="Butler A.P."/>
            <person name="Carder C."/>
            <person name="Carter N.P."/>
            <person name="Chapman J.C."/>
            <person name="Clamp M."/>
            <person name="Clark G."/>
            <person name="Clark L.N."/>
            <person name="Clark S.Y."/>
            <person name="Clee C.M."/>
            <person name="Clegg S."/>
            <person name="Cobley V.E."/>
            <person name="Collier R.E."/>
            <person name="Connor R.E."/>
            <person name="Corby N.R."/>
            <person name="Coulson A."/>
            <person name="Coville G.J."/>
            <person name="Deadman R."/>
            <person name="Dhami P.D."/>
            <person name="Dunn M."/>
            <person name="Ellington A.G."/>
            <person name="Frankland J.A."/>
            <person name="Fraser A."/>
            <person name="French L."/>
            <person name="Garner P."/>
            <person name="Grafham D.V."/>
            <person name="Griffiths C."/>
            <person name="Griffiths M.N.D."/>
            <person name="Gwilliam R."/>
            <person name="Hall R.E."/>
            <person name="Hammond S."/>
            <person name="Harley J.L."/>
            <person name="Heath P.D."/>
            <person name="Ho S."/>
            <person name="Holden J.L."/>
            <person name="Howden P.J."/>
            <person name="Huckle E."/>
            <person name="Hunt A.R."/>
            <person name="Hunt S.E."/>
            <person name="Jekosch K."/>
            <person name="Johnson C.M."/>
            <person name="Johnson D."/>
            <person name="Kay M.P."/>
            <person name="Kimberley A.M."/>
            <person name="King A."/>
            <person name="Knights A."/>
            <person name="Laird G.K."/>
            <person name="Lawlor S."/>
            <person name="Lehvaeslaiho M.H."/>
            <person name="Leversha M.A."/>
            <person name="Lloyd C."/>
            <person name="Lloyd D.M."/>
            <person name="Lovell J.D."/>
            <person name="Marsh V.L."/>
            <person name="Martin S.L."/>
            <person name="McConnachie L.J."/>
            <person name="McLay K."/>
            <person name="McMurray A.A."/>
            <person name="Milne S.A."/>
            <person name="Mistry D."/>
            <person name="Moore M.J.F."/>
            <person name="Mullikin J.C."/>
            <person name="Nickerson T."/>
            <person name="Oliver K."/>
            <person name="Parker A."/>
            <person name="Patel R."/>
            <person name="Pearce T.A.V."/>
            <person name="Peck A.I."/>
            <person name="Phillimore B.J.C.T."/>
            <person name="Prathalingam S.R."/>
            <person name="Plumb R.W."/>
            <person name="Ramsay H."/>
            <person name="Rice C.M."/>
            <person name="Ross M.T."/>
            <person name="Scott C.E."/>
            <person name="Sehra H.K."/>
            <person name="Shownkeen R."/>
            <person name="Sims S."/>
            <person name="Skuce C.D."/>
            <person name="Smith M.L."/>
            <person name="Soderlund C."/>
            <person name="Steward C.A."/>
            <person name="Sulston J.E."/>
            <person name="Swann R.M."/>
            <person name="Sycamore N."/>
            <person name="Taylor R."/>
            <person name="Tee L."/>
            <person name="Thomas D.W."/>
            <person name="Thorpe A."/>
            <person name="Tracey A."/>
            <person name="Tromans A.C."/>
            <person name="Vaudin M."/>
            <person name="Wall M."/>
            <person name="Wallis J.M."/>
            <person name="Whitehead S.L."/>
            <person name="Whittaker P."/>
            <person name="Willey D.L."/>
            <person name="Williams L."/>
            <person name="Williams S.A."/>
            <person name="Wilming L."/>
            <person name="Wray P.W."/>
            <person name="Hubbard T."/>
            <person name="Durbin R.M."/>
            <person name="Bentley D.R."/>
            <person name="Beck S."/>
            <person name="Rogers J."/>
        </authorList>
    </citation>
    <scope>NUCLEOTIDE SEQUENCE [LARGE SCALE GENOMIC DNA]</scope>
</reference>
<reference key="5">
    <citation type="journal article" date="2004" name="Genome Res.">
        <title>The status, quality, and expansion of the NIH full-length cDNA project: the Mammalian Gene Collection (MGC).</title>
        <authorList>
            <consortium name="The MGC Project Team"/>
        </authorList>
    </citation>
    <scope>NUCLEOTIDE SEQUENCE [LARGE SCALE MRNA] (ISOFORM 1)</scope>
    <source>
        <tissue>Brain</tissue>
        <tissue>Colon</tissue>
    </source>
</reference>
<reference key="6">
    <citation type="journal article" date="2002" name="Kidney Blood Press. Res.">
        <title>Activation of Na+/K+-ATPase by the serum and glucocorticoid-dependent kinase isoforms.</title>
        <authorList>
            <person name="Henke G."/>
            <person name="Setiawan I."/>
            <person name="Boehmer C."/>
            <person name="Lang F."/>
        </authorList>
    </citation>
    <scope>FUNCTION IN THE REGULATION OF NA(+)/K(+) ATPASE</scope>
</reference>
<reference key="7">
    <citation type="journal article" date="2002" name="Pflugers Arch.">
        <title>K(+) channel activation by all three isoforms of serum- and glucocorticoid-dependent protein kinase SGK.</title>
        <authorList>
            <person name="Gamper N."/>
            <person name="Fillon S."/>
            <person name="Feng Y."/>
            <person name="Friedrich B."/>
            <person name="Lang P.A."/>
            <person name="Henke G."/>
            <person name="Huber S.M."/>
            <person name="Kobayashi T."/>
            <person name="Cohen P."/>
            <person name="Lang F."/>
        </authorList>
    </citation>
    <scope>FUNCTION</scope>
</reference>
<reference key="8">
    <citation type="journal article" date="2003" name="Pflugers Arch.">
        <title>Regulation of KCNE1-dependent K(+) current by the serum and glucocorticoid-inducible kinase (SGK) isoforms.</title>
        <authorList>
            <person name="Embark H.M."/>
            <person name="Boehmer C."/>
            <person name="Vallon V."/>
            <person name="Luft F."/>
            <person name="Lang F."/>
        </authorList>
    </citation>
    <scope>FUNCTION IN THE REGULATION OF KCNE1 AND KCNQ1</scope>
</reference>
<reference key="9">
    <citation type="journal article" date="2003" name="Pflugers Arch.">
        <title>The serine/threonine kinases SGK2 and SGK3 are potent stimulators of the epithelial Na+ channel alpha,beta,gamma-ENaC.</title>
        <authorList>
            <person name="Friedrich B."/>
            <person name="Feng Y."/>
            <person name="Cohen P."/>
            <person name="Risler T."/>
            <person name="Vandewalle A."/>
            <person name="Broeer S."/>
            <person name="Wang J."/>
            <person name="Pearce D."/>
            <person name="Lang F."/>
        </authorList>
    </citation>
    <scope>FUNCTION IN THE REGULATION OF SCNN1A/ENAC</scope>
</reference>
<reference key="10">
    <citation type="journal article" date="2004" name="J. Cell. Physiol.">
        <title>Regulation of the voltage gated K+ channel Kv1.3 by the ubiquitin ligase Nedd4-2 and the serum and glucocorticoid inducible kinase SGK1.</title>
        <authorList>
            <person name="Henke G."/>
            <person name="Maier G."/>
            <person name="Wallisch S."/>
            <person name="Boehmer C."/>
            <person name="Lang F."/>
        </authorList>
    </citation>
    <scope>FUNCTION IN THE REGULATION OF KCNA3/KV1.3</scope>
</reference>
<reference key="11">
    <citation type="journal article" date="2010" name="Cell. Physiol. Biochem.">
        <title>The serum and glucocorticoid inducible kinases SGK1-3 stimulate the neutral amino acid transporter SLC6A19.</title>
        <authorList>
            <person name="Boehmer C."/>
            <person name="Sopjani M."/>
            <person name="Klaus F."/>
            <person name="Lindner R."/>
            <person name="Laufer J."/>
            <person name="Jeyaraj S."/>
            <person name="Lang F."/>
            <person name="Palmada M."/>
        </authorList>
    </citation>
    <scope>FUNCTION IN THE REGULATION OF SLC6A19</scope>
</reference>
<reference key="12">
    <citation type="journal article" date="2011" name="Mol. Biol. Cell">
        <title>Serum- and glucocorticoid-induced kinase 3 in recycling endosomes mediates acute activation of Na+/H+ exchanger NHE3 by glucocorticoids.</title>
        <authorList>
            <person name="He P."/>
            <person name="Lee S.J."/>
            <person name="Lin S."/>
            <person name="Seidler U."/>
            <person name="Lang F."/>
            <person name="Fejes-Toth G."/>
            <person name="Naray-Fejes-Toth A."/>
            <person name="Yun C.C."/>
        </authorList>
    </citation>
    <scope>FUNCTION IN THE REGULATION OF SLC9A3/NHE3</scope>
    <scope>SUBCELLULAR LOCATION</scope>
</reference>
<reference key="13">
    <citation type="journal article" date="2006" name="Annu. Rev. Physiol.">
        <title>Sgk kinases and their role in epithelial transport.</title>
        <authorList>
            <person name="Loffing J."/>
            <person name="Flores S.Y."/>
            <person name="Staub O."/>
        </authorList>
    </citation>
    <scope>REVIEW</scope>
</reference>
<reference key="14">
    <citation type="journal article" date="2010" name="Growth Factors">
        <title>Second AKT: the rise of SGK in cancer signalling.</title>
        <authorList>
            <person name="Bruhn M.A."/>
            <person name="Pearson R.B."/>
            <person name="Hannan R.D."/>
            <person name="Sheppard K.E."/>
        </authorList>
    </citation>
    <scope>REVIEW ON FUNCTION</scope>
</reference>
<reference key="15">
    <citation type="journal article" date="2007" name="Nature">
        <title>Patterns of somatic mutation in human cancer genomes.</title>
        <authorList>
            <person name="Greenman C."/>
            <person name="Stephens P."/>
            <person name="Smith R."/>
            <person name="Dalgliesh G.L."/>
            <person name="Hunter C."/>
            <person name="Bignell G."/>
            <person name="Davies H."/>
            <person name="Teague J."/>
            <person name="Butler A."/>
            <person name="Stevens C."/>
            <person name="Edkins S."/>
            <person name="O'Meara S."/>
            <person name="Vastrik I."/>
            <person name="Schmidt E.E."/>
            <person name="Avis T."/>
            <person name="Barthorpe S."/>
            <person name="Bhamra G."/>
            <person name="Buck G."/>
            <person name="Choudhury B."/>
            <person name="Clements J."/>
            <person name="Cole J."/>
            <person name="Dicks E."/>
            <person name="Forbes S."/>
            <person name="Gray K."/>
            <person name="Halliday K."/>
            <person name="Harrison R."/>
            <person name="Hills K."/>
            <person name="Hinton J."/>
            <person name="Jenkinson A."/>
            <person name="Jones D."/>
            <person name="Menzies A."/>
            <person name="Mironenko T."/>
            <person name="Perry J."/>
            <person name="Raine K."/>
            <person name="Richardson D."/>
            <person name="Shepherd R."/>
            <person name="Small A."/>
            <person name="Tofts C."/>
            <person name="Varian J."/>
            <person name="Webb T."/>
            <person name="West S."/>
            <person name="Widaa S."/>
            <person name="Yates A."/>
            <person name="Cahill D.P."/>
            <person name="Louis D.N."/>
            <person name="Goldstraw P."/>
            <person name="Nicholson A.G."/>
            <person name="Brasseur F."/>
            <person name="Looijenga L."/>
            <person name="Weber B.L."/>
            <person name="Chiew Y.-E."/>
            <person name="DeFazio A."/>
            <person name="Greaves M.F."/>
            <person name="Green A.R."/>
            <person name="Campbell P."/>
            <person name="Birney E."/>
            <person name="Easton D.F."/>
            <person name="Chenevix-Trench G."/>
            <person name="Tan M.-H."/>
            <person name="Khoo S.K."/>
            <person name="Teh B.T."/>
            <person name="Yuen S.T."/>
            <person name="Leung S.Y."/>
            <person name="Wooster R."/>
            <person name="Futreal P.A."/>
            <person name="Stratton M.R."/>
        </authorList>
    </citation>
    <scope>VARIANTS [LARGE SCALE ANALYSIS] LYS-199 AND TYR-289</scope>
    <scope>VARIANT THR-12 (ISOFORM 2)</scope>
</reference>
<feature type="chain" id="PRO_0000086646" description="Serine/threonine-protein kinase Sgk2">
    <location>
        <begin position="1"/>
        <end position="367"/>
    </location>
</feature>
<feature type="domain" description="Protein kinase" evidence="3">
    <location>
        <begin position="35"/>
        <end position="292"/>
    </location>
</feature>
<feature type="domain" description="AGC-kinase C-terminal" evidence="4">
    <location>
        <begin position="293"/>
        <end position="367"/>
    </location>
</feature>
<feature type="region of interest" description="Disordered" evidence="6">
    <location>
        <begin position="1"/>
        <end position="26"/>
    </location>
</feature>
<feature type="short sequence motif" description="Nuclear localization signal" evidence="1">
    <location>
        <begin position="68"/>
        <end position="78"/>
    </location>
</feature>
<feature type="active site" description="Proton acceptor" evidence="3 5">
    <location>
        <position position="159"/>
    </location>
</feature>
<feature type="binding site" evidence="3">
    <location>
        <begin position="41"/>
        <end position="49"/>
    </location>
    <ligand>
        <name>ATP</name>
        <dbReference type="ChEBI" id="CHEBI:30616"/>
    </ligand>
</feature>
<feature type="binding site" evidence="3">
    <location>
        <position position="64"/>
    </location>
    <ligand>
        <name>ATP</name>
        <dbReference type="ChEBI" id="CHEBI:30616"/>
    </ligand>
</feature>
<feature type="modified residue" description="Phosphoserine" evidence="2">
    <location>
        <position position="10"/>
    </location>
</feature>
<feature type="modified residue" description="Phosphothreonine; by PDPK1" evidence="7">
    <location>
        <position position="193"/>
    </location>
</feature>
<feature type="modified residue" description="Phosphoserine" evidence="4">
    <location>
        <position position="334"/>
    </location>
</feature>
<feature type="modified residue" description="Phosphoserine" evidence="4">
    <location>
        <position position="356"/>
    </location>
</feature>
<feature type="modified residue" description="Phosphotyrosine" evidence="4">
    <location>
        <position position="357"/>
    </location>
</feature>
<feature type="splice variant" id="VSP_060876" description="In isoform 2." evidence="16">
    <original>M</original>
    <variation>MQGLLTSGRKPSGGGRCTGRGGWRGQWCLKPWMGGADPPTPTLSCLLLPVPPELPDHCYRM</variation>
    <location>
        <position position="1"/>
    </location>
</feature>
<feature type="splice variant" id="VSP_060877" description="In isoform 3." evidence="16">
    <original>M</original>
    <variation>MQGLLTSGRKPSGGGRCTELPDHCYRM</variation>
    <location>
        <position position="1"/>
    </location>
</feature>
<feature type="sequence variant" id="VAR_041074" description="In a lung adenocarcinoma sample; somatic mutation." evidence="13">
    <original>E</original>
    <variation>K</variation>
    <location>
        <position position="199"/>
    </location>
</feature>
<feature type="sequence variant" id="VAR_041075" description="In dbSNP:rs35793869." evidence="13">
    <original>H</original>
    <variation>Y</variation>
    <location>
        <position position="289"/>
    </location>
</feature>
<feature type="mutagenesis site" description="Increased activation." evidence="7">
    <original>S</original>
    <variation>D</variation>
    <location>
        <position position="356"/>
    </location>
</feature>
<feature type="sequence conflict" description="In Ref. 2; AAX88805." evidence="16" ref="2">
    <original>K</original>
    <variation>E</variation>
    <location>
        <position position="108"/>
    </location>
</feature>
<feature type="sequence conflict" description="In Ref. 3; AAV38901." evidence="16" ref="3">
    <original>G</original>
    <variation>D</variation>
    <location>
        <position position="148"/>
    </location>
</feature>
<feature type="sequence conflict" description="In Ref. 2; AAX88805." evidence="16" ref="2">
    <original>L</original>
    <variation>P</variation>
    <location>
        <position position="277"/>
    </location>
</feature>
<feature type="sequence variant" id="VAR_083966" description="In dbSNP:rs33969356." evidence="13">
    <original>S</original>
    <variation>T</variation>
    <location sequence="Q9HBY8-1">
        <position position="12"/>
    </location>
</feature>